<reference key="1">
    <citation type="submission" date="2007-07" db="EMBL/GenBank/DDBJ databases">
        <title>Genome sequence of Campylobacter curvus 525.92 isolated from human feces.</title>
        <authorList>
            <person name="Fouts D.E."/>
            <person name="Mongodin E.F."/>
            <person name="Puiu D."/>
            <person name="Sebastian Y."/>
            <person name="Miller W.G."/>
            <person name="Mandrell R.E."/>
            <person name="Lastovica A.J."/>
            <person name="Nelson K.E."/>
        </authorList>
    </citation>
    <scope>NUCLEOTIDE SEQUENCE [LARGE SCALE GENOMIC DNA]</scope>
    <source>
        <strain>525.92</strain>
    </source>
</reference>
<evidence type="ECO:0000255" key="1">
    <source>
        <dbReference type="HAMAP-Rule" id="MF_01690"/>
    </source>
</evidence>
<organism>
    <name type="scientific">Campylobacter curvus (strain 525.92)</name>
    <dbReference type="NCBI Taxonomy" id="360105"/>
    <lineage>
        <taxon>Bacteria</taxon>
        <taxon>Pseudomonadati</taxon>
        <taxon>Campylobacterota</taxon>
        <taxon>Epsilonproteobacteria</taxon>
        <taxon>Campylobacterales</taxon>
        <taxon>Campylobacteraceae</taxon>
        <taxon>Campylobacter</taxon>
    </lineage>
</organism>
<proteinExistence type="inferred from homology"/>
<protein>
    <recommendedName>
        <fullName evidence="1">Succinyl-diaminopimelate desuccinylase</fullName>
        <shortName evidence="1">SDAP desuccinylase</shortName>
        <ecNumber evidence="1">3.5.1.18</ecNumber>
    </recommendedName>
    <alternativeName>
        <fullName evidence="1">N-succinyl-LL-2,6-diaminoheptanedioate amidohydrolase</fullName>
    </alternativeName>
</protein>
<gene>
    <name evidence="1" type="primary">dapE</name>
    <name type="ordered locus">Ccur92_04750</name>
    <name type="ORF">CCV52592_0990</name>
</gene>
<comment type="function">
    <text evidence="1">Catalyzes the hydrolysis of N-succinyl-L,L-diaminopimelic acid (SDAP), forming succinate and LL-2,6-diaminopimelate (DAP), an intermediate involved in the bacterial biosynthesis of lysine and meso-diaminopimelic acid, an essential component of bacterial cell walls.</text>
</comment>
<comment type="catalytic activity">
    <reaction evidence="1">
        <text>N-succinyl-(2S,6S)-2,6-diaminopimelate + H2O = (2S,6S)-2,6-diaminopimelate + succinate</text>
        <dbReference type="Rhea" id="RHEA:22608"/>
        <dbReference type="ChEBI" id="CHEBI:15377"/>
        <dbReference type="ChEBI" id="CHEBI:30031"/>
        <dbReference type="ChEBI" id="CHEBI:57609"/>
        <dbReference type="ChEBI" id="CHEBI:58087"/>
        <dbReference type="EC" id="3.5.1.18"/>
    </reaction>
</comment>
<comment type="cofactor">
    <cofactor evidence="1">
        <name>Zn(2+)</name>
        <dbReference type="ChEBI" id="CHEBI:29105"/>
    </cofactor>
    <cofactor evidence="1">
        <name>Co(2+)</name>
        <dbReference type="ChEBI" id="CHEBI:48828"/>
    </cofactor>
    <text evidence="1">Binds 2 Zn(2+) or Co(2+) ions per subunit.</text>
</comment>
<comment type="pathway">
    <text evidence="1">Amino-acid biosynthesis; L-lysine biosynthesis via DAP pathway; LL-2,6-diaminopimelate from (S)-tetrahydrodipicolinate (succinylase route): step 3/3.</text>
</comment>
<comment type="subunit">
    <text evidence="1">Homodimer.</text>
</comment>
<comment type="similarity">
    <text evidence="1">Belongs to the peptidase M20A family. DapE subfamily.</text>
</comment>
<dbReference type="EC" id="3.5.1.18" evidence="1"/>
<dbReference type="EMBL" id="CP000767">
    <property type="protein sequence ID" value="EAT99833.1"/>
    <property type="molecule type" value="Genomic_DNA"/>
</dbReference>
<dbReference type="RefSeq" id="WP_011991969.1">
    <property type="nucleotide sequence ID" value="NC_009715.2"/>
</dbReference>
<dbReference type="SMR" id="A7GX37"/>
<dbReference type="STRING" id="360105.CCV52592_0990"/>
<dbReference type="KEGG" id="ccv:CCV52592_0990"/>
<dbReference type="HOGENOM" id="CLU_021802_4_0_7"/>
<dbReference type="OrthoDB" id="5486471at2"/>
<dbReference type="UniPathway" id="UPA00034">
    <property type="reaction ID" value="UER00021"/>
</dbReference>
<dbReference type="Proteomes" id="UP000006380">
    <property type="component" value="Chromosome"/>
</dbReference>
<dbReference type="GO" id="GO:0008777">
    <property type="term" value="F:acetylornithine deacetylase activity"/>
    <property type="evidence" value="ECO:0007669"/>
    <property type="project" value="TreeGrafter"/>
</dbReference>
<dbReference type="GO" id="GO:0046872">
    <property type="term" value="F:metal ion binding"/>
    <property type="evidence" value="ECO:0007669"/>
    <property type="project" value="UniProtKB-KW"/>
</dbReference>
<dbReference type="GO" id="GO:0009014">
    <property type="term" value="F:succinyl-diaminopimelate desuccinylase activity"/>
    <property type="evidence" value="ECO:0007669"/>
    <property type="project" value="UniProtKB-EC"/>
</dbReference>
<dbReference type="GO" id="GO:0019877">
    <property type="term" value="P:diaminopimelate biosynthetic process"/>
    <property type="evidence" value="ECO:0007669"/>
    <property type="project" value="UniProtKB-KW"/>
</dbReference>
<dbReference type="GO" id="GO:0006526">
    <property type="term" value="P:L-arginine biosynthetic process"/>
    <property type="evidence" value="ECO:0007669"/>
    <property type="project" value="TreeGrafter"/>
</dbReference>
<dbReference type="GO" id="GO:0009089">
    <property type="term" value="P:lysine biosynthetic process via diaminopimelate"/>
    <property type="evidence" value="ECO:0007669"/>
    <property type="project" value="UniProtKB-UniPathway"/>
</dbReference>
<dbReference type="CDD" id="cd03891">
    <property type="entry name" value="M20_DapE_proteobac"/>
    <property type="match status" value="1"/>
</dbReference>
<dbReference type="Gene3D" id="1.10.150.900">
    <property type="match status" value="1"/>
</dbReference>
<dbReference type="Gene3D" id="3.30.70.360">
    <property type="match status" value="1"/>
</dbReference>
<dbReference type="Gene3D" id="3.40.630.10">
    <property type="entry name" value="Zn peptidases"/>
    <property type="match status" value="1"/>
</dbReference>
<dbReference type="HAMAP" id="MF_01690">
    <property type="entry name" value="DapE"/>
    <property type="match status" value="1"/>
</dbReference>
<dbReference type="InterPro" id="IPR001261">
    <property type="entry name" value="ArgE/DapE_CS"/>
</dbReference>
<dbReference type="InterPro" id="IPR036264">
    <property type="entry name" value="Bact_exopeptidase_dim_dom"/>
</dbReference>
<dbReference type="InterPro" id="IPR005941">
    <property type="entry name" value="DapE_proteobac"/>
</dbReference>
<dbReference type="InterPro" id="IPR002933">
    <property type="entry name" value="Peptidase_M20"/>
</dbReference>
<dbReference type="InterPro" id="IPR011650">
    <property type="entry name" value="Peptidase_M20_dimer"/>
</dbReference>
<dbReference type="InterPro" id="IPR050072">
    <property type="entry name" value="Peptidase_M20A"/>
</dbReference>
<dbReference type="NCBIfam" id="TIGR01246">
    <property type="entry name" value="dapE_proteo"/>
    <property type="match status" value="1"/>
</dbReference>
<dbReference type="NCBIfam" id="NF009557">
    <property type="entry name" value="PRK13009.1"/>
    <property type="match status" value="1"/>
</dbReference>
<dbReference type="PANTHER" id="PTHR43808">
    <property type="entry name" value="ACETYLORNITHINE DEACETYLASE"/>
    <property type="match status" value="1"/>
</dbReference>
<dbReference type="PANTHER" id="PTHR43808:SF31">
    <property type="entry name" value="N-ACETYL-L-CITRULLINE DEACETYLASE"/>
    <property type="match status" value="1"/>
</dbReference>
<dbReference type="Pfam" id="PF07687">
    <property type="entry name" value="M20_dimer"/>
    <property type="match status" value="1"/>
</dbReference>
<dbReference type="Pfam" id="PF01546">
    <property type="entry name" value="Peptidase_M20"/>
    <property type="match status" value="1"/>
</dbReference>
<dbReference type="SUPFAM" id="SSF55031">
    <property type="entry name" value="Bacterial exopeptidase dimerisation domain"/>
    <property type="match status" value="1"/>
</dbReference>
<dbReference type="SUPFAM" id="SSF53187">
    <property type="entry name" value="Zn-dependent exopeptidases"/>
    <property type="match status" value="1"/>
</dbReference>
<dbReference type="PROSITE" id="PS00758">
    <property type="entry name" value="ARGE_DAPE_CPG2_1"/>
    <property type="match status" value="1"/>
</dbReference>
<dbReference type="PROSITE" id="PS00759">
    <property type="entry name" value="ARGE_DAPE_CPG2_2"/>
    <property type="match status" value="1"/>
</dbReference>
<feature type="chain" id="PRO_0000375517" description="Succinyl-diaminopimelate desuccinylase">
    <location>
        <begin position="1"/>
        <end position="365"/>
    </location>
</feature>
<feature type="active site" evidence="1">
    <location>
        <position position="66"/>
    </location>
</feature>
<feature type="active site" description="Proton acceptor" evidence="1">
    <location>
        <position position="125"/>
    </location>
</feature>
<feature type="binding site" evidence="1">
    <location>
        <position position="64"/>
    </location>
    <ligand>
        <name>Zn(2+)</name>
        <dbReference type="ChEBI" id="CHEBI:29105"/>
        <label>1</label>
    </ligand>
</feature>
<feature type="binding site" evidence="1">
    <location>
        <position position="95"/>
    </location>
    <ligand>
        <name>Zn(2+)</name>
        <dbReference type="ChEBI" id="CHEBI:29105"/>
        <label>1</label>
    </ligand>
</feature>
<feature type="binding site" evidence="1">
    <location>
        <position position="95"/>
    </location>
    <ligand>
        <name>Zn(2+)</name>
        <dbReference type="ChEBI" id="CHEBI:29105"/>
        <label>2</label>
    </ligand>
</feature>
<feature type="binding site" evidence="1">
    <location>
        <position position="126"/>
    </location>
    <ligand>
        <name>Zn(2+)</name>
        <dbReference type="ChEBI" id="CHEBI:29105"/>
        <label>2</label>
    </ligand>
</feature>
<feature type="binding site" evidence="1">
    <location>
        <position position="154"/>
    </location>
    <ligand>
        <name>Zn(2+)</name>
        <dbReference type="ChEBI" id="CHEBI:29105"/>
        <label>1</label>
    </ligand>
</feature>
<feature type="binding site" evidence="1">
    <location>
        <position position="339"/>
    </location>
    <ligand>
        <name>Zn(2+)</name>
        <dbReference type="ChEBI" id="CHEBI:29105"/>
        <label>2</label>
    </ligand>
</feature>
<accession>A7GX37</accession>
<name>DAPE_CAMC5</name>
<sequence>MDVVAFFTEILKFRSITPDDDGCLKFIAEFLGDFEARFIEKNGVKNLILSKRFGDGAHLAFAGHVDVVPPGEGWQSEPFTPLMKDGFIYARGAQDMKSGVAAFVCACRDAKNFNGRLTLILTSDEEGDALFGTLEALKILKERGELPQFAVVAEPTCTGVFGDTIKVGRRGSINGKILIRGVQGHVAYPEKCVNPVHQIAPLLSRIAGHDMDAGSEFFSPSKIVITDIRGGMEVCNVTPSELGIMFNVRNSDITSADDVKNYLQSVLEGLNFELSLKQSSKPFLTDKDSKIVRAMSKAVQKISGVAPQLNTKGGTSDARYLAEFGVKVVEFGVINDRIHAVDERAGVKEVERLYLVFKELIENFA</sequence>
<keyword id="KW-0028">Amino-acid biosynthesis</keyword>
<keyword id="KW-0170">Cobalt</keyword>
<keyword id="KW-0220">Diaminopimelate biosynthesis</keyword>
<keyword id="KW-0378">Hydrolase</keyword>
<keyword id="KW-0457">Lysine biosynthesis</keyword>
<keyword id="KW-0479">Metal-binding</keyword>
<keyword id="KW-1185">Reference proteome</keyword>
<keyword id="KW-0862">Zinc</keyword>